<keyword id="KW-0998">Cell outer membrane</keyword>
<keyword id="KW-0472">Membrane</keyword>
<keyword id="KW-0732">Signal</keyword>
<keyword id="KW-0812">Transmembrane</keyword>
<keyword id="KW-1134">Transmembrane beta strand</keyword>
<name>OP28_NEIGO</name>
<evidence type="ECO:0000255" key="1"/>
<evidence type="ECO:0000305" key="2"/>
<accession>P11297</accession>
<protein>
    <recommendedName>
        <fullName>Opacity protein V28</fullName>
    </recommendedName>
</protein>
<reference key="1">
    <citation type="journal article" date="1986" name="Cell">
        <title>Opacity genes in Neisseria gonorrhoeae: control of phase and antigenic variation.</title>
        <authorList>
            <person name="Stern A."/>
            <person name="Brown M."/>
            <person name="Nickel P."/>
            <person name="Meyer T.F."/>
        </authorList>
    </citation>
    <scope>NUCLEOTIDE SEQUENCE [GENOMIC DNA]</scope>
</reference>
<proteinExistence type="inferred from homology"/>
<sequence length="234" mass="26771">AGEDHGRGPYVQADLAYAYEHITHDYPEPTGTKKDKISTVSDYFRNIRTHSIHPRVSVGYDFGGWRIAADYARYRKWNDNKYSVDIKELENKNQNKRDLKTENQENGTFHAVSSLGLSAVYDFKLNDKFKPYIGARVAYGHVRHSIDSTKKTTKFLTSSYGGLNPTVYTEENTQNAHHQSNSIRRVGLGVIAGVGFDITPKLTLDAGYRYHNWGRLENTRFKTHEASLGVRYRF</sequence>
<feature type="signal peptide" evidence="1">
    <location>
        <begin position="1" status="less than"/>
        <end position="1"/>
    </location>
</feature>
<feature type="chain" id="PRO_0000021900" description="Opacity protein V28">
    <location>
        <begin position="2"/>
        <end position="234" status="greater than"/>
    </location>
</feature>
<feature type="non-terminal residue">
    <location>
        <position position="1"/>
    </location>
</feature>
<feature type="non-terminal residue">
    <location>
        <position position="234"/>
    </location>
</feature>
<comment type="function">
    <text>Implicated in a number of adherence functions. OPA proteins are implicated in pathogenesis and are subject to phase variation.</text>
</comment>
<comment type="subcellular location">
    <subcellularLocation>
        <location>Cell outer membrane</location>
    </subcellularLocation>
</comment>
<comment type="similarity">
    <text evidence="2">Belongs to the opacity porin family.</text>
</comment>
<organism>
    <name type="scientific">Neisseria gonorrhoeae</name>
    <dbReference type="NCBI Taxonomy" id="485"/>
    <lineage>
        <taxon>Bacteria</taxon>
        <taxon>Pseudomonadati</taxon>
        <taxon>Pseudomonadota</taxon>
        <taxon>Betaproteobacteria</taxon>
        <taxon>Neisseriales</taxon>
        <taxon>Neisseriaceae</taxon>
        <taxon>Neisseria</taxon>
    </lineage>
</organism>
<dbReference type="EMBL" id="M14747">
    <property type="status" value="NOT_ANNOTATED_CDS"/>
    <property type="molecule type" value="Genomic_DNA"/>
</dbReference>
<dbReference type="PIR" id="B24429">
    <property type="entry name" value="KONH8"/>
</dbReference>
<dbReference type="SMR" id="P11297"/>
<dbReference type="Reactome" id="R-HSA-202733">
    <property type="pathway name" value="Cell surface interactions at the vascular wall"/>
</dbReference>
<dbReference type="GO" id="GO:0009279">
    <property type="term" value="C:cell outer membrane"/>
    <property type="evidence" value="ECO:0000304"/>
    <property type="project" value="Reactome"/>
</dbReference>
<dbReference type="GO" id="GO:0015288">
    <property type="term" value="F:porin activity"/>
    <property type="evidence" value="ECO:0007669"/>
    <property type="project" value="InterPro"/>
</dbReference>
<dbReference type="FunFam" id="2.40.160.20:FF:000005">
    <property type="entry name" value="Opacity protein opA54"/>
    <property type="match status" value="1"/>
</dbReference>
<dbReference type="Gene3D" id="2.40.160.20">
    <property type="match status" value="1"/>
</dbReference>
<dbReference type="InterPro" id="IPR006315">
    <property type="entry name" value="OM_autotransptr_brl_dom"/>
</dbReference>
<dbReference type="InterPro" id="IPR011250">
    <property type="entry name" value="OMP/PagP_b-brl"/>
</dbReference>
<dbReference type="InterPro" id="IPR003394">
    <property type="entry name" value="Porin_opacity"/>
</dbReference>
<dbReference type="NCBIfam" id="TIGR01414">
    <property type="entry name" value="autotrans_barl"/>
    <property type="match status" value="1"/>
</dbReference>
<dbReference type="Pfam" id="PF02462">
    <property type="entry name" value="Opacity"/>
    <property type="match status" value="1"/>
</dbReference>
<dbReference type="SUPFAM" id="SSF56925">
    <property type="entry name" value="OMPA-like"/>
    <property type="match status" value="1"/>
</dbReference>